<comment type="function">
    <text evidence="1">With S4 and S5 plays an important role in translational accuracy. Located at the interface of the 30S and 50S subunits (By similarity).</text>
</comment>
<comment type="subunit">
    <text evidence="1">Part of the 30S ribosomal subunit.</text>
</comment>
<comment type="subcellular location">
    <subcellularLocation>
        <location>Plastid</location>
        <location>Chloroplast</location>
    </subcellularLocation>
</comment>
<comment type="similarity">
    <text evidence="3">Belongs to the universal ribosomal protein uS12 family.</text>
</comment>
<geneLocation type="chloroplast"/>
<dbReference type="EMBL" id="AP009376">
    <property type="protein sequence ID" value="BAF50662.1"/>
    <property type="molecule type" value="Genomic_DNA"/>
</dbReference>
<dbReference type="EMBL" id="AP009376">
    <property type="protein sequence ID" value="BAF50685.1"/>
    <property type="molecule type" value="Genomic_DNA"/>
</dbReference>
<dbReference type="SMR" id="A4QLV7"/>
<dbReference type="GO" id="GO:0009507">
    <property type="term" value="C:chloroplast"/>
    <property type="evidence" value="ECO:0007669"/>
    <property type="project" value="UniProtKB-SubCell"/>
</dbReference>
<dbReference type="GO" id="GO:0015935">
    <property type="term" value="C:small ribosomal subunit"/>
    <property type="evidence" value="ECO:0007669"/>
    <property type="project" value="InterPro"/>
</dbReference>
<dbReference type="GO" id="GO:0019843">
    <property type="term" value="F:rRNA binding"/>
    <property type="evidence" value="ECO:0007669"/>
    <property type="project" value="UniProtKB-UniRule"/>
</dbReference>
<dbReference type="GO" id="GO:0003735">
    <property type="term" value="F:structural constituent of ribosome"/>
    <property type="evidence" value="ECO:0007669"/>
    <property type="project" value="InterPro"/>
</dbReference>
<dbReference type="GO" id="GO:0006412">
    <property type="term" value="P:translation"/>
    <property type="evidence" value="ECO:0007669"/>
    <property type="project" value="UniProtKB-UniRule"/>
</dbReference>
<dbReference type="CDD" id="cd03368">
    <property type="entry name" value="Ribosomal_S12"/>
    <property type="match status" value="1"/>
</dbReference>
<dbReference type="FunFam" id="2.40.50.140:FF:000008">
    <property type="entry name" value="30S ribosomal protein S12, chloroplastic"/>
    <property type="match status" value="1"/>
</dbReference>
<dbReference type="Gene3D" id="2.40.50.140">
    <property type="entry name" value="Nucleic acid-binding proteins"/>
    <property type="match status" value="1"/>
</dbReference>
<dbReference type="HAMAP" id="MF_00403_B">
    <property type="entry name" value="Ribosomal_uS12_B"/>
    <property type="match status" value="1"/>
</dbReference>
<dbReference type="InterPro" id="IPR012340">
    <property type="entry name" value="NA-bd_OB-fold"/>
</dbReference>
<dbReference type="InterPro" id="IPR006032">
    <property type="entry name" value="Ribosomal_uS12"/>
</dbReference>
<dbReference type="InterPro" id="IPR005679">
    <property type="entry name" value="Ribosomal_uS12_bac"/>
</dbReference>
<dbReference type="NCBIfam" id="TIGR00981">
    <property type="entry name" value="rpsL_bact"/>
    <property type="match status" value="1"/>
</dbReference>
<dbReference type="PANTHER" id="PTHR11652">
    <property type="entry name" value="30S RIBOSOMAL PROTEIN S12 FAMILY MEMBER"/>
    <property type="match status" value="1"/>
</dbReference>
<dbReference type="Pfam" id="PF00164">
    <property type="entry name" value="Ribosom_S12_S23"/>
    <property type="match status" value="1"/>
</dbReference>
<dbReference type="PIRSF" id="PIRSF002133">
    <property type="entry name" value="Ribosomal_S12/S23"/>
    <property type="match status" value="1"/>
</dbReference>
<dbReference type="PRINTS" id="PR01034">
    <property type="entry name" value="RIBOSOMALS12"/>
</dbReference>
<dbReference type="SUPFAM" id="SSF50249">
    <property type="entry name" value="Nucleic acid-binding proteins"/>
    <property type="match status" value="1"/>
</dbReference>
<dbReference type="PROSITE" id="PS00055">
    <property type="entry name" value="RIBOSOMAL_S12"/>
    <property type="match status" value="1"/>
</dbReference>
<gene>
    <name type="primary">rps12-A</name>
</gene>
<gene>
    <name type="primary">rps12-B</name>
</gene>
<protein>
    <recommendedName>
        <fullName evidence="2">Small ribosomal subunit protein uS12cz/uS12cy</fullName>
    </recommendedName>
    <alternativeName>
        <fullName evidence="3">30S ribosomal protein S12, chloroplastic</fullName>
    </alternativeName>
</protein>
<feature type="chain" id="PRO_0000296072" description="Small ribosomal subunit protein uS12cz/uS12cy">
    <location>
        <begin position="1"/>
        <end position="123"/>
    </location>
</feature>
<sequence>MPTIKQLIRNTRQPIRNVTKSPALRGCPQRRGTCTRVYTITPKKPNSALRKVARVRLTSGFEITAYIPGIGHNLQEHSVVLVRGGRVKDLPGVRYHIVRGTLDAVGVKDRQQGRSKYGVKKPK</sequence>
<organism>
    <name type="scientific">Nasturtium officinale</name>
    <name type="common">Watercress</name>
    <name type="synonym">Rorippa nasturtium-aquaticum</name>
    <dbReference type="NCBI Taxonomy" id="65948"/>
    <lineage>
        <taxon>Eukaryota</taxon>
        <taxon>Viridiplantae</taxon>
        <taxon>Streptophyta</taxon>
        <taxon>Embryophyta</taxon>
        <taxon>Tracheophyta</taxon>
        <taxon>Spermatophyta</taxon>
        <taxon>Magnoliopsida</taxon>
        <taxon>eudicotyledons</taxon>
        <taxon>Gunneridae</taxon>
        <taxon>Pentapetalae</taxon>
        <taxon>rosids</taxon>
        <taxon>malvids</taxon>
        <taxon>Brassicales</taxon>
        <taxon>Brassicaceae</taxon>
        <taxon>Cardamineae</taxon>
        <taxon>Nasturtium</taxon>
    </lineage>
</organism>
<keyword id="KW-0150">Chloroplast</keyword>
<keyword id="KW-0934">Plastid</keyword>
<keyword id="KW-0687">Ribonucleoprotein</keyword>
<keyword id="KW-0689">Ribosomal protein</keyword>
<keyword id="KW-0694">RNA-binding</keyword>
<keyword id="KW-0699">rRNA-binding</keyword>
<name>RR12_NASOF</name>
<accession>A4QLV7</accession>
<reference key="1">
    <citation type="submission" date="2007-03" db="EMBL/GenBank/DDBJ databases">
        <title>Sequencing analysis of Nasturtium officinale chloroplast DNA.</title>
        <authorList>
            <person name="Hosouchi T."/>
            <person name="Tsuruoka H."/>
            <person name="Kotani H."/>
        </authorList>
    </citation>
    <scope>NUCLEOTIDE SEQUENCE [LARGE SCALE GENOMIC DNA]</scope>
</reference>
<evidence type="ECO:0000250" key="1"/>
<evidence type="ECO:0000255" key="2">
    <source>
        <dbReference type="HAMAP-Rule" id="MF_00403"/>
    </source>
</evidence>
<evidence type="ECO:0000305" key="3"/>
<proteinExistence type="inferred from homology"/>